<protein>
    <recommendedName>
        <fullName evidence="1">Small ribosomal subunit protein uS11</fullName>
    </recommendedName>
    <alternativeName>
        <fullName evidence="2">30S ribosomal protein S11</fullName>
    </alternativeName>
</protein>
<accession>A6VLL1</accession>
<name>RS11_ACTSZ</name>
<gene>
    <name evidence="1" type="primary">rpsK</name>
    <name type="ordered locus">Asuc_0482</name>
</gene>
<keyword id="KW-1185">Reference proteome</keyword>
<keyword id="KW-0687">Ribonucleoprotein</keyword>
<keyword id="KW-0689">Ribosomal protein</keyword>
<keyword id="KW-0694">RNA-binding</keyword>
<keyword id="KW-0699">rRNA-binding</keyword>
<feature type="chain" id="PRO_1000073199" description="Small ribosomal subunit protein uS11">
    <location>
        <begin position="1"/>
        <end position="129"/>
    </location>
</feature>
<organism>
    <name type="scientific">Actinobacillus succinogenes (strain ATCC 55618 / DSM 22257 / CCUG 43843 / 130Z)</name>
    <dbReference type="NCBI Taxonomy" id="339671"/>
    <lineage>
        <taxon>Bacteria</taxon>
        <taxon>Pseudomonadati</taxon>
        <taxon>Pseudomonadota</taxon>
        <taxon>Gammaproteobacteria</taxon>
        <taxon>Pasteurellales</taxon>
        <taxon>Pasteurellaceae</taxon>
        <taxon>Actinobacillus</taxon>
    </lineage>
</organism>
<reference key="1">
    <citation type="journal article" date="2010" name="BMC Genomics">
        <title>A genomic perspective on the potential of Actinobacillus succinogenes for industrial succinate production.</title>
        <authorList>
            <person name="McKinlay J.B."/>
            <person name="Laivenieks M."/>
            <person name="Schindler B.D."/>
            <person name="McKinlay A.A."/>
            <person name="Siddaramappa S."/>
            <person name="Challacombe J.F."/>
            <person name="Lowry S.R."/>
            <person name="Clum A."/>
            <person name="Lapidus A.L."/>
            <person name="Burkhart K.B."/>
            <person name="Harkins V."/>
            <person name="Vieille C."/>
        </authorList>
    </citation>
    <scope>NUCLEOTIDE SEQUENCE [LARGE SCALE GENOMIC DNA]</scope>
    <source>
        <strain>ATCC 55618 / DSM 22257 / CCUG 43843 / 130Z</strain>
    </source>
</reference>
<proteinExistence type="inferred from homology"/>
<sequence>MAKTPVRARKRVKKQVVDGVAHIHASFNNTIVTITDRQGNALAWATAGGSGFRGSRKSTPFAAQVAAERCAEMVKEFGLKNLEVMVKGPGPGRESTIRALNAAGFRITNITDVTPIPHNGCRPPKKRRV</sequence>
<evidence type="ECO:0000255" key="1">
    <source>
        <dbReference type="HAMAP-Rule" id="MF_01310"/>
    </source>
</evidence>
<evidence type="ECO:0000305" key="2"/>
<dbReference type="EMBL" id="CP000746">
    <property type="protein sequence ID" value="ABR73858.1"/>
    <property type="molecule type" value="Genomic_DNA"/>
</dbReference>
<dbReference type="RefSeq" id="WP_012072238.1">
    <property type="nucleotide sequence ID" value="NC_009655.1"/>
</dbReference>
<dbReference type="SMR" id="A6VLL1"/>
<dbReference type="STRING" id="339671.Asuc_0482"/>
<dbReference type="GeneID" id="93226860"/>
<dbReference type="KEGG" id="asu:Asuc_0482"/>
<dbReference type="eggNOG" id="COG0100">
    <property type="taxonomic scope" value="Bacteria"/>
</dbReference>
<dbReference type="HOGENOM" id="CLU_072439_5_0_6"/>
<dbReference type="OrthoDB" id="9806415at2"/>
<dbReference type="Proteomes" id="UP000001114">
    <property type="component" value="Chromosome"/>
</dbReference>
<dbReference type="GO" id="GO:1990904">
    <property type="term" value="C:ribonucleoprotein complex"/>
    <property type="evidence" value="ECO:0007669"/>
    <property type="project" value="UniProtKB-KW"/>
</dbReference>
<dbReference type="GO" id="GO:0005840">
    <property type="term" value="C:ribosome"/>
    <property type="evidence" value="ECO:0007669"/>
    <property type="project" value="UniProtKB-KW"/>
</dbReference>
<dbReference type="GO" id="GO:0019843">
    <property type="term" value="F:rRNA binding"/>
    <property type="evidence" value="ECO:0007669"/>
    <property type="project" value="UniProtKB-UniRule"/>
</dbReference>
<dbReference type="GO" id="GO:0003735">
    <property type="term" value="F:structural constituent of ribosome"/>
    <property type="evidence" value="ECO:0007669"/>
    <property type="project" value="InterPro"/>
</dbReference>
<dbReference type="GO" id="GO:0006412">
    <property type="term" value="P:translation"/>
    <property type="evidence" value="ECO:0007669"/>
    <property type="project" value="UniProtKB-UniRule"/>
</dbReference>
<dbReference type="FunFam" id="3.30.420.80:FF:000001">
    <property type="entry name" value="30S ribosomal protein S11"/>
    <property type="match status" value="1"/>
</dbReference>
<dbReference type="Gene3D" id="3.30.420.80">
    <property type="entry name" value="Ribosomal protein S11"/>
    <property type="match status" value="1"/>
</dbReference>
<dbReference type="HAMAP" id="MF_01310">
    <property type="entry name" value="Ribosomal_uS11"/>
    <property type="match status" value="1"/>
</dbReference>
<dbReference type="InterPro" id="IPR001971">
    <property type="entry name" value="Ribosomal_uS11"/>
</dbReference>
<dbReference type="InterPro" id="IPR019981">
    <property type="entry name" value="Ribosomal_uS11_bac-type"/>
</dbReference>
<dbReference type="InterPro" id="IPR018102">
    <property type="entry name" value="Ribosomal_uS11_CS"/>
</dbReference>
<dbReference type="InterPro" id="IPR036967">
    <property type="entry name" value="Ribosomal_uS11_sf"/>
</dbReference>
<dbReference type="NCBIfam" id="NF003698">
    <property type="entry name" value="PRK05309.1"/>
    <property type="match status" value="1"/>
</dbReference>
<dbReference type="NCBIfam" id="TIGR03632">
    <property type="entry name" value="uS11_bact"/>
    <property type="match status" value="1"/>
</dbReference>
<dbReference type="PANTHER" id="PTHR11759">
    <property type="entry name" value="40S RIBOSOMAL PROTEIN S14/30S RIBOSOMAL PROTEIN S11"/>
    <property type="match status" value="1"/>
</dbReference>
<dbReference type="Pfam" id="PF00411">
    <property type="entry name" value="Ribosomal_S11"/>
    <property type="match status" value="1"/>
</dbReference>
<dbReference type="PIRSF" id="PIRSF002131">
    <property type="entry name" value="Ribosomal_S11"/>
    <property type="match status" value="1"/>
</dbReference>
<dbReference type="SUPFAM" id="SSF53137">
    <property type="entry name" value="Translational machinery components"/>
    <property type="match status" value="1"/>
</dbReference>
<dbReference type="PROSITE" id="PS00054">
    <property type="entry name" value="RIBOSOMAL_S11"/>
    <property type="match status" value="1"/>
</dbReference>
<comment type="function">
    <text evidence="1">Located on the platform of the 30S subunit, it bridges several disparate RNA helices of the 16S rRNA. Forms part of the Shine-Dalgarno cleft in the 70S ribosome.</text>
</comment>
<comment type="subunit">
    <text evidence="1">Part of the 30S ribosomal subunit. Interacts with proteins S7 and S18. Binds to IF-3.</text>
</comment>
<comment type="similarity">
    <text evidence="1">Belongs to the universal ribosomal protein uS11 family.</text>
</comment>